<protein>
    <recommendedName>
        <fullName evidence="1">Acetyl-coenzyme A carboxylase carboxyl transferase subunit beta</fullName>
        <shortName evidence="1">ACCase subunit beta</shortName>
        <shortName evidence="1">Acetyl-CoA carboxylase carboxyltransferase subunit beta</shortName>
        <ecNumber evidence="1">2.1.3.15</ecNumber>
    </recommendedName>
</protein>
<accession>C6X3B5</accession>
<comment type="function">
    <text evidence="1">Component of the acetyl coenzyme A carboxylase (ACC) complex. Biotin carboxylase (BC) catalyzes the carboxylation of biotin on its carrier protein (BCCP) and then the CO(2) group is transferred by the transcarboxylase to acetyl-CoA to form malonyl-CoA.</text>
</comment>
<comment type="catalytic activity">
    <reaction evidence="1">
        <text>N(6)-carboxybiotinyl-L-lysyl-[protein] + acetyl-CoA = N(6)-biotinyl-L-lysyl-[protein] + malonyl-CoA</text>
        <dbReference type="Rhea" id="RHEA:54728"/>
        <dbReference type="Rhea" id="RHEA-COMP:10505"/>
        <dbReference type="Rhea" id="RHEA-COMP:10506"/>
        <dbReference type="ChEBI" id="CHEBI:57288"/>
        <dbReference type="ChEBI" id="CHEBI:57384"/>
        <dbReference type="ChEBI" id="CHEBI:83144"/>
        <dbReference type="ChEBI" id="CHEBI:83145"/>
        <dbReference type="EC" id="2.1.3.15"/>
    </reaction>
</comment>
<comment type="pathway">
    <text evidence="1">Lipid metabolism; malonyl-CoA biosynthesis; malonyl-CoA from acetyl-CoA: step 1/1.</text>
</comment>
<comment type="subunit">
    <text evidence="1">Acetyl-CoA carboxylase is a heterohexamer composed of biotin carboxyl carrier protein (AccB), biotin carboxylase (AccC) and two subunits each of ACCase subunit alpha (AccA) and ACCase subunit beta (AccD).</text>
</comment>
<comment type="subcellular location">
    <subcellularLocation>
        <location evidence="1">Cytoplasm</location>
    </subcellularLocation>
</comment>
<comment type="similarity">
    <text evidence="1">Belongs to the AccD/PCCB family.</text>
</comment>
<feature type="chain" id="PRO_0000389742" description="Acetyl-coenzyme A carboxylase carboxyl transferase subunit beta">
    <location>
        <begin position="1"/>
        <end position="282"/>
    </location>
</feature>
<feature type="domain" description="CoA carboxyltransferase N-terminal" evidence="2">
    <location>
        <begin position="26"/>
        <end position="282"/>
    </location>
</feature>
<gene>
    <name evidence="1" type="primary">accD</name>
    <name type="ordered locus">FIC_02495</name>
</gene>
<evidence type="ECO:0000255" key="1">
    <source>
        <dbReference type="HAMAP-Rule" id="MF_01395"/>
    </source>
</evidence>
<evidence type="ECO:0000255" key="2">
    <source>
        <dbReference type="PROSITE-ProRule" id="PRU01136"/>
    </source>
</evidence>
<keyword id="KW-0067">ATP-binding</keyword>
<keyword id="KW-0963">Cytoplasm</keyword>
<keyword id="KW-0275">Fatty acid biosynthesis</keyword>
<keyword id="KW-0276">Fatty acid metabolism</keyword>
<keyword id="KW-0444">Lipid biosynthesis</keyword>
<keyword id="KW-0443">Lipid metabolism</keyword>
<keyword id="KW-0547">Nucleotide-binding</keyword>
<keyword id="KW-1185">Reference proteome</keyword>
<keyword id="KW-0808">Transferase</keyword>
<dbReference type="EC" id="2.1.3.15" evidence="1"/>
<dbReference type="EMBL" id="CP001673">
    <property type="protein sequence ID" value="ACU08928.1"/>
    <property type="molecule type" value="Genomic_DNA"/>
</dbReference>
<dbReference type="SMR" id="C6X3B5"/>
<dbReference type="STRING" id="531844.FIC_02495"/>
<dbReference type="KEGG" id="fba:FIC_02495"/>
<dbReference type="eggNOG" id="COG0777">
    <property type="taxonomic scope" value="Bacteria"/>
</dbReference>
<dbReference type="HOGENOM" id="CLU_015486_1_1_10"/>
<dbReference type="OrthoDB" id="9772975at2"/>
<dbReference type="UniPathway" id="UPA00655">
    <property type="reaction ID" value="UER00711"/>
</dbReference>
<dbReference type="Proteomes" id="UP000001512">
    <property type="component" value="Chromosome"/>
</dbReference>
<dbReference type="GO" id="GO:0009317">
    <property type="term" value="C:acetyl-CoA carboxylase complex"/>
    <property type="evidence" value="ECO:0007669"/>
    <property type="project" value="InterPro"/>
</dbReference>
<dbReference type="GO" id="GO:0003989">
    <property type="term" value="F:acetyl-CoA carboxylase activity"/>
    <property type="evidence" value="ECO:0007669"/>
    <property type="project" value="InterPro"/>
</dbReference>
<dbReference type="GO" id="GO:0005524">
    <property type="term" value="F:ATP binding"/>
    <property type="evidence" value="ECO:0007669"/>
    <property type="project" value="UniProtKB-KW"/>
</dbReference>
<dbReference type="GO" id="GO:0016743">
    <property type="term" value="F:carboxyl- or carbamoyltransferase activity"/>
    <property type="evidence" value="ECO:0007669"/>
    <property type="project" value="UniProtKB-UniRule"/>
</dbReference>
<dbReference type="GO" id="GO:0006633">
    <property type="term" value="P:fatty acid biosynthetic process"/>
    <property type="evidence" value="ECO:0007669"/>
    <property type="project" value="UniProtKB-KW"/>
</dbReference>
<dbReference type="GO" id="GO:2001295">
    <property type="term" value="P:malonyl-CoA biosynthetic process"/>
    <property type="evidence" value="ECO:0007669"/>
    <property type="project" value="UniProtKB-UniRule"/>
</dbReference>
<dbReference type="Gene3D" id="3.90.226.10">
    <property type="entry name" value="2-enoyl-CoA Hydratase, Chain A, domain 1"/>
    <property type="match status" value="1"/>
</dbReference>
<dbReference type="HAMAP" id="MF_01395">
    <property type="entry name" value="AcetylCoA_CT_beta"/>
    <property type="match status" value="1"/>
</dbReference>
<dbReference type="InterPro" id="IPR034733">
    <property type="entry name" value="AcCoA_carboxyl_beta"/>
</dbReference>
<dbReference type="InterPro" id="IPR000438">
    <property type="entry name" value="Acetyl_CoA_COase_Trfase_b_su"/>
</dbReference>
<dbReference type="InterPro" id="IPR029045">
    <property type="entry name" value="ClpP/crotonase-like_dom_sf"/>
</dbReference>
<dbReference type="InterPro" id="IPR011762">
    <property type="entry name" value="COA_CT_N"/>
</dbReference>
<dbReference type="NCBIfam" id="TIGR00515">
    <property type="entry name" value="accD"/>
    <property type="match status" value="1"/>
</dbReference>
<dbReference type="PANTHER" id="PTHR42995">
    <property type="entry name" value="ACETYL-COENZYME A CARBOXYLASE CARBOXYL TRANSFERASE SUBUNIT BETA, CHLOROPLASTIC"/>
    <property type="match status" value="1"/>
</dbReference>
<dbReference type="PANTHER" id="PTHR42995:SF5">
    <property type="entry name" value="ACETYL-COENZYME A CARBOXYLASE CARBOXYL TRANSFERASE SUBUNIT BETA, CHLOROPLASTIC"/>
    <property type="match status" value="1"/>
</dbReference>
<dbReference type="Pfam" id="PF01039">
    <property type="entry name" value="Carboxyl_trans"/>
    <property type="match status" value="1"/>
</dbReference>
<dbReference type="PRINTS" id="PR01070">
    <property type="entry name" value="ACCCTRFRASEB"/>
</dbReference>
<dbReference type="SUPFAM" id="SSF52096">
    <property type="entry name" value="ClpP/crotonase"/>
    <property type="match status" value="1"/>
</dbReference>
<dbReference type="PROSITE" id="PS50980">
    <property type="entry name" value="COA_CT_NTER"/>
    <property type="match status" value="1"/>
</dbReference>
<name>ACCD_FLAB3</name>
<reference key="1">
    <citation type="journal article" date="2008" name="Extremophiles">
        <title>A bacterial ice-binding protein from the Vostok ice core.</title>
        <authorList>
            <person name="Raymond J.A."/>
            <person name="Christner B.C."/>
            <person name="Schuster S.C."/>
        </authorList>
    </citation>
    <scope>NUCLEOTIDE SEQUENCE [LARGE SCALE GENOMIC DNA]</scope>
    <source>
        <strain>3519-10</strain>
    </source>
</reference>
<proteinExistence type="inferred from homology"/>
<organism>
    <name type="scientific">Flavobacteriaceae bacterium (strain 3519-10)</name>
    <dbReference type="NCBI Taxonomy" id="531844"/>
    <lineage>
        <taxon>Bacteria</taxon>
        <taxon>Pseudomonadati</taxon>
        <taxon>Bacteroidota</taxon>
        <taxon>Flavobacteriia</taxon>
        <taxon>Flavobacteriales</taxon>
        <taxon>Flavobacteriaceae</taxon>
    </lineage>
</organism>
<sequence length="282" mass="31563">MAFDWFKRKTKNITTSTEDKKDVPKGLWHQTPTGKIIEHEELKANNYVSPEDGFHVRIGSREFFSILFDDNKFTELDANVESVDMLGFKDTKAYVDRLKEVKAKTKLTDSIRNAVGRVNGEQMVISCMDFAFIGGSLGSVMGEKIRRAVDYCIANRLPYMIICQSGGARMQEATYSLMQLAKVQAKLAQLSEEGLLYIAYLCDPTFGGITASFAMTADIIMAEPGALIGFAGPRVIRETIGKDLPEGFQTSEFLQEKGFVDFIVKRTEIKEKVSKTVKLLVH</sequence>